<sequence length="687" mass="77566">MTLKPSKRRKGRSRHSRKKQITSAILTEEGIMIKAKPSSPYTYANRMADKRSRSSIDNISRTSFQSNISRTSFQSNSDNNSIFETASLISCVTCLSDTDTIDRSETSTTDTSKDDLSANPKLHYPSVNGQLPANTVIPYGRILDARYIEKEPLHYYDANSSPSSPLSSSMSNISEKCDLDELESSQKKERKGNSLSRGSNSSSSLLTSRSPFTKLVEVIFARPRRHDVVPKRVSLYIDYKPHSSSHLKEEDDLVEEILKRSYKNTRRNKSIFVIINPFGGKGKAKKLFMTKAKPLLLASRCSIEVVYTKYPGHAIEIAREMDIDKYDTIACASGDGIPHEVINGLYQRPDHVKAFNNIAITEIPCGSGNAMSVSCHWTNNPSYSTLCLIKSIETRIDLMCCSQPSYAREHPKLSFLSQTYGLIAETDINTEFIRWMGPARFELGVAFNIIQKKKYPCEIYVKYAAKSKNELKNHYLEHKNKGSLEFQHITMNKDNEDCDNYNYENEYETENEDEDEDADADDEDSHLISRDLADSSADQIKEEDFKIKYPLDEGIPSDWERLDPNISNNLGIFYTGKMPYVAADTKFFPAALPSDGTMDMVITDARTSLTRMAPILLGLDKGSHVLQPEVLHSKILAYKIIPKLGNGLFSVDGEKFPLEPLQVEIMPRLCKTLLRNGRYVDTDFDSM</sequence>
<comment type="function">
    <text evidence="5 6 7 8 10 11">Catalyzes the phosphorylation of the sphingoid long chain bases dihydrosphingosine (DHS or sphinganine) and phytosphingosine (PHS) to form dihydrosphingosine 1-phosphate (DHS-1P) and phytosphingosine 1-phosphate (PHS-1P) respectively (PubMed:11102354, PubMed:12493772, PubMed:25345524, PubMed:9677363). Redundant to LCB4, is only responsible for few percent of the total activity (PubMed:9677363). Involved in the biosynthesis of sphingolipids and ceramides (PubMed:25345524, PubMed:9677363). Involved in heat-induced transient cell cycle arrest (PubMed:11056159). Accumulation of phosphorylated sphingoid long chain bases (LCBPs) stimulates calcium influx and activates calcineurin signaling (PubMed:11102354, PubMed:11278643). Involved in heat-stress resistance (PubMed:11056159).</text>
</comment>
<comment type="catalytic activity">
    <reaction evidence="10 11">
        <text>(4R)-hydroxysphinganine + ATP = (4R)-hydroxysphinganine 1-phosphate + ADP + H(+)</text>
        <dbReference type="Rhea" id="RHEA:33563"/>
        <dbReference type="ChEBI" id="CHEBI:15378"/>
        <dbReference type="ChEBI" id="CHEBI:30616"/>
        <dbReference type="ChEBI" id="CHEBI:64124"/>
        <dbReference type="ChEBI" id="CHEBI:64795"/>
        <dbReference type="ChEBI" id="CHEBI:456216"/>
        <dbReference type="EC" id="2.7.1.91"/>
    </reaction>
    <physiologicalReaction direction="left-to-right" evidence="10 12">
        <dbReference type="Rhea" id="RHEA:33564"/>
    </physiologicalReaction>
</comment>
<comment type="catalytic activity">
    <reaction evidence="11">
        <text>a sphingoid base + ATP = a sphingoid 1-phosphate + ADP + H(+)</text>
        <dbReference type="Rhea" id="RHEA:51496"/>
        <dbReference type="ChEBI" id="CHEBI:15378"/>
        <dbReference type="ChEBI" id="CHEBI:30616"/>
        <dbReference type="ChEBI" id="CHEBI:76941"/>
        <dbReference type="ChEBI" id="CHEBI:84410"/>
        <dbReference type="ChEBI" id="CHEBI:456216"/>
        <dbReference type="EC" id="2.7.1.91"/>
    </reaction>
</comment>
<comment type="catalytic activity">
    <reaction evidence="11">
        <text>sphinganine + ATP = sphinganine 1-phosphate + ADP + H(+)</text>
        <dbReference type="Rhea" id="RHEA:15465"/>
        <dbReference type="ChEBI" id="CHEBI:15378"/>
        <dbReference type="ChEBI" id="CHEBI:30616"/>
        <dbReference type="ChEBI" id="CHEBI:57817"/>
        <dbReference type="ChEBI" id="CHEBI:57939"/>
        <dbReference type="ChEBI" id="CHEBI:456216"/>
        <dbReference type="EC" id="2.7.1.91"/>
    </reaction>
    <physiologicalReaction direction="left-to-right" evidence="12">
        <dbReference type="Rhea" id="RHEA:15466"/>
    </physiologicalReaction>
</comment>
<comment type="biophysicochemical properties">
    <kinetics>
        <KM evidence="11">2 uM for dihydrosphingosine</KM>
    </kinetics>
</comment>
<comment type="subcellular location">
    <subcellularLocation>
        <location evidence="8">Golgi apparatus membrane</location>
        <topology evidence="8">Peripheral membrane protein</topology>
    </subcellularLocation>
</comment>
<comment type="miscellaneous">
    <text evidence="9">Present with 1760 molecules/cell in log phase SD medium.</text>
</comment>
<evidence type="ECO:0000250" key="1"/>
<evidence type="ECO:0000250" key="2">
    <source>
        <dbReference type="UniProtKB" id="Q12246"/>
    </source>
</evidence>
<evidence type="ECO:0000255" key="3">
    <source>
        <dbReference type="PROSITE-ProRule" id="PRU00783"/>
    </source>
</evidence>
<evidence type="ECO:0000256" key="4">
    <source>
        <dbReference type="SAM" id="MobiDB-lite"/>
    </source>
</evidence>
<evidence type="ECO:0000269" key="5">
    <source>
    </source>
</evidence>
<evidence type="ECO:0000269" key="6">
    <source>
    </source>
</evidence>
<evidence type="ECO:0000269" key="7">
    <source>
    </source>
</evidence>
<evidence type="ECO:0000269" key="8">
    <source>
    </source>
</evidence>
<evidence type="ECO:0000269" key="9">
    <source>
    </source>
</evidence>
<evidence type="ECO:0000269" key="10">
    <source>
    </source>
</evidence>
<evidence type="ECO:0000269" key="11">
    <source>
    </source>
</evidence>
<evidence type="ECO:0000305" key="12">
    <source>
    </source>
</evidence>
<keyword id="KW-0067">ATP-binding</keyword>
<keyword id="KW-0333">Golgi apparatus</keyword>
<keyword id="KW-0418">Kinase</keyword>
<keyword id="KW-0443">Lipid metabolism</keyword>
<keyword id="KW-0449">Lipoprotein</keyword>
<keyword id="KW-0472">Membrane</keyword>
<keyword id="KW-0547">Nucleotide-binding</keyword>
<keyword id="KW-0564">Palmitate</keyword>
<keyword id="KW-1185">Reference proteome</keyword>
<keyword id="KW-0746">Sphingolipid metabolism</keyword>
<keyword id="KW-0808">Transferase</keyword>
<organism>
    <name type="scientific">Saccharomyces cerevisiae (strain ATCC 204508 / S288c)</name>
    <name type="common">Baker's yeast</name>
    <dbReference type="NCBI Taxonomy" id="559292"/>
    <lineage>
        <taxon>Eukaryota</taxon>
        <taxon>Fungi</taxon>
        <taxon>Dikarya</taxon>
        <taxon>Ascomycota</taxon>
        <taxon>Saccharomycotina</taxon>
        <taxon>Saccharomycetes</taxon>
        <taxon>Saccharomycetales</taxon>
        <taxon>Saccharomycetaceae</taxon>
        <taxon>Saccharomyces</taxon>
    </lineage>
</organism>
<gene>
    <name type="primary">LCB5</name>
    <name type="ordered locus">YLR260W</name>
</gene>
<feature type="chain" id="PRO_0000255957" description="Sphingoid long chain base kinase 5">
    <location>
        <begin position="1"/>
        <end position="687"/>
    </location>
</feature>
<feature type="domain" description="DAGKc" evidence="3">
    <location>
        <begin position="266"/>
        <end position="405"/>
    </location>
</feature>
<feature type="region of interest" description="Disordered" evidence="4">
    <location>
        <begin position="1"/>
        <end position="20"/>
    </location>
</feature>
<feature type="region of interest" description="Disordered" evidence="4">
    <location>
        <begin position="101"/>
        <end position="130"/>
    </location>
</feature>
<feature type="region of interest" description="Disordered" evidence="4">
    <location>
        <begin position="180"/>
        <end position="207"/>
    </location>
</feature>
<feature type="region of interest" description="Disordered" evidence="4">
    <location>
        <begin position="506"/>
        <end position="525"/>
    </location>
</feature>
<feature type="compositionally biased region" description="Basic and acidic residues" evidence="4">
    <location>
        <begin position="101"/>
        <end position="116"/>
    </location>
</feature>
<feature type="compositionally biased region" description="Low complexity" evidence="4">
    <location>
        <begin position="193"/>
        <end position="207"/>
    </location>
</feature>
<feature type="compositionally biased region" description="Acidic residues" evidence="4">
    <location>
        <begin position="506"/>
        <end position="524"/>
    </location>
</feature>
<feature type="active site" description="Proton donor/acceptor" evidence="1">
    <location>
        <position position="335"/>
    </location>
</feature>
<feature type="binding site" evidence="3">
    <location>
        <begin position="276"/>
        <end position="278"/>
    </location>
    <ligand>
        <name>ATP</name>
        <dbReference type="ChEBI" id="CHEBI:30616"/>
    </ligand>
</feature>
<feature type="binding site" evidence="3">
    <location>
        <position position="308"/>
    </location>
    <ligand>
        <name>ATP</name>
        <dbReference type="ChEBI" id="CHEBI:30616"/>
    </ligand>
</feature>
<feature type="binding site" evidence="1">
    <location>
        <begin position="333"/>
        <end position="336"/>
    </location>
    <ligand>
        <name>substrate</name>
    </ligand>
</feature>
<feature type="binding site" evidence="3">
    <location>
        <position position="340"/>
    </location>
    <ligand>
        <name>ATP</name>
        <dbReference type="ChEBI" id="CHEBI:30616"/>
    </ligand>
</feature>
<feature type="binding site" evidence="3">
    <location>
        <begin position="366"/>
        <end position="368"/>
    </location>
    <ligand>
        <name>ATP</name>
        <dbReference type="ChEBI" id="CHEBI:30616"/>
    </ligand>
</feature>
<feature type="binding site" evidence="3">
    <location>
        <position position="434"/>
    </location>
    <ligand>
        <name>ATP</name>
        <dbReference type="ChEBI" id="CHEBI:30616"/>
    </ligand>
</feature>
<feature type="binding site" evidence="3">
    <location>
        <position position="440"/>
    </location>
    <ligand>
        <name>ATP</name>
        <dbReference type="ChEBI" id="CHEBI:30616"/>
    </ligand>
</feature>
<feature type="binding site" evidence="3">
    <location>
        <begin position="652"/>
        <end position="654"/>
    </location>
    <ligand>
        <name>ATP</name>
        <dbReference type="ChEBI" id="CHEBI:30616"/>
    </ligand>
</feature>
<feature type="lipid moiety-binding region" description="S-palmitoyl cysteine; by AKR1" evidence="2">
    <location>
        <position position="91"/>
    </location>
</feature>
<feature type="lipid moiety-binding region" description="S-palmitoyl cysteine; by AKR1" evidence="2">
    <location>
        <position position="94"/>
    </location>
</feature>
<accession>Q06147</accession>
<accession>D6VYQ7</accession>
<protein>
    <recommendedName>
        <fullName>Sphingoid long chain base kinase 5</fullName>
        <shortName>LCB kinase 5</shortName>
        <ecNumber evidence="11">2.7.1.91</ecNumber>
    </recommendedName>
    <alternativeName>
        <fullName>Sphinganine kinase 5</fullName>
    </alternativeName>
</protein>
<dbReference type="EC" id="2.7.1.91" evidence="11"/>
<dbReference type="EMBL" id="U17244">
    <property type="protein sequence ID" value="AAB67377.1"/>
    <property type="molecule type" value="Genomic_DNA"/>
</dbReference>
<dbReference type="EMBL" id="BK006945">
    <property type="protein sequence ID" value="DAA09573.1"/>
    <property type="molecule type" value="Genomic_DNA"/>
</dbReference>
<dbReference type="PIR" id="S51398">
    <property type="entry name" value="S51398"/>
</dbReference>
<dbReference type="RefSeq" id="NP_013361.1">
    <property type="nucleotide sequence ID" value="NM_001182147.1"/>
</dbReference>
<dbReference type="SMR" id="Q06147"/>
<dbReference type="BioGRID" id="31528">
    <property type="interactions" value="187"/>
</dbReference>
<dbReference type="FunCoup" id="Q06147">
    <property type="interactions" value="686"/>
</dbReference>
<dbReference type="IntAct" id="Q06147">
    <property type="interactions" value="17"/>
</dbReference>
<dbReference type="MINT" id="Q06147"/>
<dbReference type="STRING" id="4932.YLR260W"/>
<dbReference type="SwissLipids" id="SLP:000000110"/>
<dbReference type="iPTMnet" id="Q06147"/>
<dbReference type="PaxDb" id="4932-YLR260W"/>
<dbReference type="PeptideAtlas" id="Q06147"/>
<dbReference type="EnsemblFungi" id="YLR260W_mRNA">
    <property type="protein sequence ID" value="YLR260W"/>
    <property type="gene ID" value="YLR260W"/>
</dbReference>
<dbReference type="GeneID" id="850964"/>
<dbReference type="KEGG" id="sce:YLR260W"/>
<dbReference type="AGR" id="SGD:S000004250"/>
<dbReference type="SGD" id="S000004250">
    <property type="gene designation" value="LCB5"/>
</dbReference>
<dbReference type="VEuPathDB" id="FungiDB:YLR260W"/>
<dbReference type="eggNOG" id="KOG1116">
    <property type="taxonomic scope" value="Eukaryota"/>
</dbReference>
<dbReference type="GeneTree" id="ENSGT00940000167991"/>
<dbReference type="HOGENOM" id="CLU_013399_0_2_1"/>
<dbReference type="InParanoid" id="Q06147"/>
<dbReference type="OMA" id="DTILCAS"/>
<dbReference type="OrthoDB" id="3853857at2759"/>
<dbReference type="BioCyc" id="MetaCyc:YLR260W-MONOMER"/>
<dbReference type="BioCyc" id="YEAST:YLR260W-MONOMER"/>
<dbReference type="Reactome" id="R-SCE-1483206">
    <property type="pathway name" value="Glycerophospholipid biosynthesis"/>
</dbReference>
<dbReference type="Reactome" id="R-SCE-1660661">
    <property type="pathway name" value="Sphingolipid de novo biosynthesis"/>
</dbReference>
<dbReference type="Reactome" id="R-SCE-390471">
    <property type="pathway name" value="Association of TriC/CCT with target proteins during biosynthesis"/>
</dbReference>
<dbReference type="Reactome" id="R-SCE-5218921">
    <property type="pathway name" value="VEGFR2 mediated cell proliferation"/>
</dbReference>
<dbReference type="Reactome" id="R-SCE-9009391">
    <property type="pathway name" value="Extra-nuclear estrogen signaling"/>
</dbReference>
<dbReference type="Reactome" id="R-SCE-9833482">
    <property type="pathway name" value="PKR-mediated signaling"/>
</dbReference>
<dbReference type="SABIO-RK" id="Q06147"/>
<dbReference type="BioGRID-ORCS" id="850964">
    <property type="hits" value="0 hits in 10 CRISPR screens"/>
</dbReference>
<dbReference type="PRO" id="PR:Q06147"/>
<dbReference type="Proteomes" id="UP000002311">
    <property type="component" value="Chromosome XII"/>
</dbReference>
<dbReference type="RNAct" id="Q06147">
    <property type="molecule type" value="protein"/>
</dbReference>
<dbReference type="GO" id="GO:0005737">
    <property type="term" value="C:cytoplasm"/>
    <property type="evidence" value="ECO:0000318"/>
    <property type="project" value="GO_Central"/>
</dbReference>
<dbReference type="GO" id="GO:0005829">
    <property type="term" value="C:cytosol"/>
    <property type="evidence" value="ECO:0007005"/>
    <property type="project" value="SGD"/>
</dbReference>
<dbReference type="GO" id="GO:0005794">
    <property type="term" value="C:Golgi apparatus"/>
    <property type="evidence" value="ECO:0000314"/>
    <property type="project" value="SGD"/>
</dbReference>
<dbReference type="GO" id="GO:0000139">
    <property type="term" value="C:Golgi membrane"/>
    <property type="evidence" value="ECO:0007669"/>
    <property type="project" value="UniProtKB-SubCell"/>
</dbReference>
<dbReference type="GO" id="GO:0043231">
    <property type="term" value="C:intracellular membrane-bounded organelle"/>
    <property type="evidence" value="ECO:0000318"/>
    <property type="project" value="GO_Central"/>
</dbReference>
<dbReference type="GO" id="GO:0016020">
    <property type="term" value="C:membrane"/>
    <property type="evidence" value="ECO:0000314"/>
    <property type="project" value="SGD"/>
</dbReference>
<dbReference type="GO" id="GO:0005634">
    <property type="term" value="C:nucleus"/>
    <property type="evidence" value="ECO:0007005"/>
    <property type="project" value="SGD"/>
</dbReference>
<dbReference type="GO" id="GO:0005524">
    <property type="term" value="F:ATP binding"/>
    <property type="evidence" value="ECO:0007669"/>
    <property type="project" value="UniProtKB-KW"/>
</dbReference>
<dbReference type="GO" id="GO:0017050">
    <property type="term" value="F:D-erythro-sphingosine kinase activity"/>
    <property type="evidence" value="ECO:0000314"/>
    <property type="project" value="SGD"/>
</dbReference>
<dbReference type="GO" id="GO:0019722">
    <property type="term" value="P:calcium-mediated signaling"/>
    <property type="evidence" value="ECO:0000315"/>
    <property type="project" value="SGD"/>
</dbReference>
<dbReference type="GO" id="GO:0009408">
    <property type="term" value="P:response to heat"/>
    <property type="evidence" value="ECO:0000314"/>
    <property type="project" value="SGD"/>
</dbReference>
<dbReference type="GO" id="GO:0006665">
    <property type="term" value="P:sphingolipid metabolic process"/>
    <property type="evidence" value="ECO:0000314"/>
    <property type="project" value="SGD"/>
</dbReference>
<dbReference type="GO" id="GO:0046512">
    <property type="term" value="P:sphingosine biosynthetic process"/>
    <property type="evidence" value="ECO:0000318"/>
    <property type="project" value="GO_Central"/>
</dbReference>
<dbReference type="FunFam" id="3.40.50.10330:FF:000005">
    <property type="entry name" value="Sphingosine kinase 2"/>
    <property type="match status" value="1"/>
</dbReference>
<dbReference type="Gene3D" id="2.60.200.40">
    <property type="match status" value="1"/>
</dbReference>
<dbReference type="Gene3D" id="3.40.50.10330">
    <property type="entry name" value="Probable inorganic polyphosphate/atp-NAD kinase, domain 1"/>
    <property type="match status" value="1"/>
</dbReference>
<dbReference type="InterPro" id="IPR017438">
    <property type="entry name" value="ATP-NAD_kinase_N"/>
</dbReference>
<dbReference type="InterPro" id="IPR001206">
    <property type="entry name" value="Diacylglycerol_kinase_cat_dom"/>
</dbReference>
<dbReference type="InterPro" id="IPR050187">
    <property type="entry name" value="Lipid_Phosphate_FormReg"/>
</dbReference>
<dbReference type="InterPro" id="IPR016064">
    <property type="entry name" value="NAD/diacylglycerol_kinase_sf"/>
</dbReference>
<dbReference type="PANTHER" id="PTHR12358:SF31">
    <property type="entry name" value="ACYLGLYCEROL KINASE, MITOCHONDRIAL"/>
    <property type="match status" value="1"/>
</dbReference>
<dbReference type="PANTHER" id="PTHR12358">
    <property type="entry name" value="SPHINGOSINE KINASE"/>
    <property type="match status" value="1"/>
</dbReference>
<dbReference type="Pfam" id="PF00781">
    <property type="entry name" value="DAGK_cat"/>
    <property type="match status" value="1"/>
</dbReference>
<dbReference type="SMART" id="SM00046">
    <property type="entry name" value="DAGKc"/>
    <property type="match status" value="1"/>
</dbReference>
<dbReference type="SUPFAM" id="SSF111331">
    <property type="entry name" value="NAD kinase/diacylglycerol kinase-like"/>
    <property type="match status" value="1"/>
</dbReference>
<dbReference type="PROSITE" id="PS50146">
    <property type="entry name" value="DAGK"/>
    <property type="match status" value="1"/>
</dbReference>
<proteinExistence type="evidence at protein level"/>
<reference key="1">
    <citation type="journal article" date="1997" name="Nature">
        <title>The nucleotide sequence of Saccharomyces cerevisiae chromosome XII.</title>
        <authorList>
            <person name="Johnston M."/>
            <person name="Hillier L.W."/>
            <person name="Riles L."/>
            <person name="Albermann K."/>
            <person name="Andre B."/>
            <person name="Ansorge W."/>
            <person name="Benes V."/>
            <person name="Brueckner M."/>
            <person name="Delius H."/>
            <person name="Dubois E."/>
            <person name="Duesterhoeft A."/>
            <person name="Entian K.-D."/>
            <person name="Floeth M."/>
            <person name="Goffeau A."/>
            <person name="Hebling U."/>
            <person name="Heumann K."/>
            <person name="Heuss-Neitzel D."/>
            <person name="Hilbert H."/>
            <person name="Hilger F."/>
            <person name="Kleine K."/>
            <person name="Koetter P."/>
            <person name="Louis E.J."/>
            <person name="Messenguy F."/>
            <person name="Mewes H.-W."/>
            <person name="Miosga T."/>
            <person name="Moestl D."/>
            <person name="Mueller-Auer S."/>
            <person name="Nentwich U."/>
            <person name="Obermaier B."/>
            <person name="Piravandi E."/>
            <person name="Pohl T.M."/>
            <person name="Portetelle D."/>
            <person name="Purnelle B."/>
            <person name="Rechmann S."/>
            <person name="Rieger M."/>
            <person name="Rinke M."/>
            <person name="Rose M."/>
            <person name="Scharfe M."/>
            <person name="Scherens B."/>
            <person name="Scholler P."/>
            <person name="Schwager C."/>
            <person name="Schwarz S."/>
            <person name="Underwood A.P."/>
            <person name="Urrestarazu L.A."/>
            <person name="Vandenbol M."/>
            <person name="Verhasselt P."/>
            <person name="Vierendeels F."/>
            <person name="Voet M."/>
            <person name="Volckaert G."/>
            <person name="Voss H."/>
            <person name="Wambutt R."/>
            <person name="Wedler E."/>
            <person name="Wedler H."/>
            <person name="Zimmermann F.K."/>
            <person name="Zollner A."/>
            <person name="Hani J."/>
            <person name="Hoheisel J.D."/>
        </authorList>
    </citation>
    <scope>NUCLEOTIDE SEQUENCE [LARGE SCALE GENOMIC DNA]</scope>
    <source>
        <strain>ATCC 204508 / S288c</strain>
    </source>
</reference>
<reference key="2">
    <citation type="journal article" date="2014" name="G3 (Bethesda)">
        <title>The reference genome sequence of Saccharomyces cerevisiae: Then and now.</title>
        <authorList>
            <person name="Engel S.R."/>
            <person name="Dietrich F.S."/>
            <person name="Fisk D.G."/>
            <person name="Binkley G."/>
            <person name="Balakrishnan R."/>
            <person name="Costanzo M.C."/>
            <person name="Dwight S.S."/>
            <person name="Hitz B.C."/>
            <person name="Karra K."/>
            <person name="Nash R.S."/>
            <person name="Weng S."/>
            <person name="Wong E.D."/>
            <person name="Lloyd P."/>
            <person name="Skrzypek M.S."/>
            <person name="Miyasato S.R."/>
            <person name="Simison M."/>
            <person name="Cherry J.M."/>
        </authorList>
    </citation>
    <scope>GENOME REANNOTATION</scope>
    <source>
        <strain>ATCC 204508 / S288c</strain>
    </source>
</reference>
<reference key="3">
    <citation type="journal article" date="1998" name="J. Biol. Chem.">
        <title>The LCB4 (YOR171c) and LCB5 (YLR260w) genes of Saccharomyces encode sphingoid long chain base kinases.</title>
        <authorList>
            <person name="Nagiec M.M."/>
            <person name="Skrzypek M.S."/>
            <person name="Nagiec E.E."/>
            <person name="Lester R.L."/>
            <person name="Dickson R.C."/>
        </authorList>
    </citation>
    <scope>FUNCTION</scope>
    <scope>CATALYTIC ACTIVITY</scope>
    <scope>BIOPHYSICOCHEMICAL PROPERTIES</scope>
</reference>
<reference key="4">
    <citation type="journal article" date="2000" name="Genetics">
        <title>Accumulation of phosphorylated sphingoid long chain bases results in cell growth inhibition in Saccharomyces cerevisiae.</title>
        <authorList>
            <person name="Kim S."/>
            <person name="Fyrst H."/>
            <person name="Saba J.D."/>
        </authorList>
    </citation>
    <scope>FUNCTION</scope>
</reference>
<reference key="5">
    <citation type="journal article" date="2001" name="J. Biol. Chem.">
        <title>Role for de novo sphingoid base biosynthesis in the heat-induced transient cell cycle arrest of Saccharomyces cerevisiae.</title>
        <authorList>
            <person name="Jenkins G.M."/>
            <person name="Hannun Y.A."/>
        </authorList>
    </citation>
    <scope>FUNCTION</scope>
</reference>
<reference key="6">
    <citation type="journal article" date="2001" name="J. Biol. Chem.">
        <title>Calcium influx and signaling in yeast stimulated by intracellular sphingosine 1-phosphate accumulation.</title>
        <authorList>
            <person name="Birchwood C.J."/>
            <person name="Saba J.D."/>
            <person name="Dickson R.C."/>
            <person name="Cunningham K.W."/>
        </authorList>
    </citation>
    <scope>FUNCTION</scope>
</reference>
<reference key="7">
    <citation type="journal article" date="2003" name="J. Biol. Chem.">
        <title>Lcb4p is a key regulator of ceramide synthesis from exogenous long chain sphingoid base in Saccharomyces cerevisiae.</title>
        <authorList>
            <person name="Funato K."/>
            <person name="Lombardi R."/>
            <person name="Vallee B."/>
            <person name="Riezman H."/>
        </authorList>
    </citation>
    <scope>FUNCTION</scope>
    <scope>SUBCELLULAR LOCATION</scope>
</reference>
<reference key="8">
    <citation type="journal article" date="2003" name="Nature">
        <title>Global analysis of protein expression in yeast.</title>
        <authorList>
            <person name="Ghaemmaghami S."/>
            <person name="Huh W.-K."/>
            <person name="Bower K."/>
            <person name="Howson R.W."/>
            <person name="Belle A."/>
            <person name="Dephoure N."/>
            <person name="O'Shea E.K."/>
            <person name="Weissman J.S."/>
        </authorList>
    </citation>
    <scope>LEVEL OF PROTEIN EXPRESSION [LARGE SCALE ANALYSIS]</scope>
</reference>
<reference key="9">
    <citation type="journal article" date="2007" name="J. Proteome Res.">
        <title>Large-scale phosphorylation analysis of alpha-factor-arrested Saccharomyces cerevisiae.</title>
        <authorList>
            <person name="Li X."/>
            <person name="Gerber S.A."/>
            <person name="Rudner A.D."/>
            <person name="Beausoleil S.A."/>
            <person name="Haas W."/>
            <person name="Villen J."/>
            <person name="Elias J.E."/>
            <person name="Gygi S.P."/>
        </authorList>
    </citation>
    <scope>IDENTIFICATION BY MASS SPECTROMETRY [LARGE SCALE ANALYSIS]</scope>
    <source>
        <strain>ADR376</strain>
    </source>
</reference>
<reference key="10">
    <citation type="journal article" date="2008" name="Mol. Cell. Proteomics">
        <title>A multidimensional chromatography technology for in-depth phosphoproteome analysis.</title>
        <authorList>
            <person name="Albuquerque C.P."/>
            <person name="Smolka M.B."/>
            <person name="Payne S.H."/>
            <person name="Bafna V."/>
            <person name="Eng J."/>
            <person name="Zhou H."/>
        </authorList>
    </citation>
    <scope>IDENTIFICATION BY MASS SPECTROMETRY [LARGE SCALE ANALYSIS]</scope>
</reference>
<reference key="11">
    <citation type="journal article" date="2009" name="Science">
        <title>Global analysis of Cdk1 substrate phosphorylation sites provides insights into evolution.</title>
        <authorList>
            <person name="Holt L.J."/>
            <person name="Tuch B.B."/>
            <person name="Villen J."/>
            <person name="Johnson A.D."/>
            <person name="Gygi S.P."/>
            <person name="Morgan D.O."/>
        </authorList>
    </citation>
    <scope>IDENTIFICATION BY MASS SPECTROMETRY [LARGE SCALE ANALYSIS]</scope>
</reference>
<reference key="12">
    <citation type="journal article" date="2014" name="Nat. Commun.">
        <title>Identification of the phytosphingosine metabolic pathway leading to odd-numbered fatty acids.</title>
        <authorList>
            <person name="Kondo N."/>
            <person name="Ohno Y."/>
            <person name="Yamagata M."/>
            <person name="Obara T."/>
            <person name="Seki N."/>
            <person name="Kitamura T."/>
            <person name="Naganuma T."/>
            <person name="Kihara A."/>
        </authorList>
    </citation>
    <scope>FUNCTION</scope>
    <scope>CATALYTIC ACTIVITY</scope>
</reference>
<name>LCB5_YEAST</name>